<feature type="signal peptide" evidence="2">
    <location>
        <begin position="1"/>
        <end position="20"/>
    </location>
</feature>
<feature type="chain" id="PRO_0000002956" description="Iron transport multicopper oxidase FET3">
    <location>
        <begin position="21"/>
        <end position="624"/>
    </location>
</feature>
<feature type="topological domain" description="Extracellular" evidence="2">
    <location>
        <begin position="21"/>
        <end position="555"/>
    </location>
</feature>
<feature type="transmembrane region" description="Helical" evidence="2">
    <location>
        <begin position="556"/>
        <end position="576"/>
    </location>
</feature>
<feature type="topological domain" description="Cytoplasmic" evidence="2">
    <location>
        <begin position="577"/>
        <end position="624"/>
    </location>
</feature>
<feature type="domain" description="Plastocyanin-like 1">
    <location>
        <begin position="46"/>
        <end position="144"/>
    </location>
</feature>
<feature type="domain" description="Plastocyanin-like 2">
    <location>
        <begin position="190"/>
        <end position="292"/>
    </location>
</feature>
<feature type="domain" description="Plastocyanin-like 3">
    <location>
        <begin position="382"/>
        <end position="499"/>
    </location>
</feature>
<feature type="region of interest" description="Disordered" evidence="3">
    <location>
        <begin position="603"/>
        <end position="624"/>
    </location>
</feature>
<feature type="compositionally biased region" description="Low complexity" evidence="3">
    <location>
        <begin position="608"/>
        <end position="624"/>
    </location>
</feature>
<feature type="binding site" description="type 2 copper site" evidence="1">
    <location>
        <position position="81"/>
    </location>
    <ligand>
        <name>Cu cation</name>
        <dbReference type="ChEBI" id="CHEBI:23378"/>
        <label>1</label>
    </ligand>
</feature>
<feature type="binding site" description="type 3 copper site" evidence="1">
    <location>
        <position position="83"/>
    </location>
    <ligand>
        <name>Cu cation</name>
        <dbReference type="ChEBI" id="CHEBI:23378"/>
        <label>2</label>
    </ligand>
</feature>
<feature type="binding site" description="type 3 copper site" evidence="1">
    <location>
        <position position="126"/>
    </location>
    <ligand>
        <name>Cu cation</name>
        <dbReference type="ChEBI" id="CHEBI:23378"/>
        <label>2</label>
    </ligand>
</feature>
<feature type="binding site" description="type 3 copper site" evidence="1">
    <location>
        <position position="128"/>
    </location>
    <ligand>
        <name>Cu cation</name>
        <dbReference type="ChEBI" id="CHEBI:23378"/>
        <label>3</label>
    </ligand>
</feature>
<feature type="binding site" description="type 1 copper site" evidence="1">
    <location>
        <position position="413"/>
    </location>
    <ligand>
        <name>Cu cation</name>
        <dbReference type="ChEBI" id="CHEBI:23378"/>
        <label>4</label>
    </ligand>
</feature>
<feature type="binding site" description="type 2 copper site" evidence="1">
    <location>
        <position position="416"/>
    </location>
    <ligand>
        <name>Cu cation</name>
        <dbReference type="ChEBI" id="CHEBI:23378"/>
        <label>1</label>
    </ligand>
</feature>
<feature type="binding site" description="type 3 copper site" evidence="1">
    <location>
        <position position="418"/>
    </location>
    <ligand>
        <name>Cu cation</name>
        <dbReference type="ChEBI" id="CHEBI:23378"/>
        <label>3</label>
    </ligand>
</feature>
<feature type="binding site" description="type 3 copper site" evidence="1">
    <location>
        <position position="481"/>
    </location>
    <ligand>
        <name>Cu cation</name>
        <dbReference type="ChEBI" id="CHEBI:23378"/>
        <label>3</label>
    </ligand>
</feature>
<feature type="binding site" description="type 1 copper site" evidence="1">
    <location>
        <position position="482"/>
    </location>
    <ligand>
        <name>Cu cation</name>
        <dbReference type="ChEBI" id="CHEBI:23378"/>
        <label>4</label>
    </ligand>
</feature>
<feature type="binding site" description="type 3 copper site" evidence="1">
    <location>
        <position position="483"/>
    </location>
    <ligand>
        <name>Cu cation</name>
        <dbReference type="ChEBI" id="CHEBI:23378"/>
        <label>2</label>
    </ligand>
</feature>
<feature type="binding site" description="type 1 copper site" evidence="1">
    <location>
        <position position="487"/>
    </location>
    <ligand>
        <name>Cu cation</name>
        <dbReference type="ChEBI" id="CHEBI:23378"/>
        <label>4</label>
    </ligand>
</feature>
<feature type="glycosylation site" description="N-linked (GlcNAc...) asparagine" evidence="2">
    <location>
        <position position="49"/>
    </location>
</feature>
<feature type="glycosylation site" description="N-linked (GlcNAc...) asparagine" evidence="2">
    <location>
        <position position="77"/>
    </location>
</feature>
<feature type="glycosylation site" description="N-linked (GlcNAc...) asparagine" evidence="2">
    <location>
        <position position="113"/>
    </location>
</feature>
<feature type="glycosylation site" description="N-linked (GlcNAc...) asparagine" evidence="2">
    <location>
        <position position="194"/>
    </location>
</feature>
<feature type="glycosylation site" description="N-linked (GlcNAc...) asparagine" evidence="2">
    <location>
        <position position="198"/>
    </location>
</feature>
<feature type="glycosylation site" description="N-linked (GlcNAc...) asparagine" evidence="2">
    <location>
        <position position="244"/>
    </location>
</feature>
<feature type="glycosylation site" description="N-linked (GlcNAc...) asparagine" evidence="2">
    <location>
        <position position="265"/>
    </location>
</feature>
<feature type="glycosylation site" description="N-linked (GlcNAc...) asparagine" evidence="2">
    <location>
        <position position="292"/>
    </location>
</feature>
<feature type="glycosylation site" description="N-linked (GlcNAc...) asparagine" evidence="2">
    <location>
        <position position="300"/>
    </location>
</feature>
<feature type="glycosylation site" description="N-linked (GlcNAc...) asparagine" evidence="2">
    <location>
        <position position="359"/>
    </location>
</feature>
<feature type="glycosylation site" description="N-linked (GlcNAc...) asparagine" evidence="2">
    <location>
        <position position="441"/>
    </location>
</feature>
<sequence length="624" mass="70635">MRTFLSSFIILTTFLASLIAAETHTWYFKTGWVDANPDGVYPRKMIGFNDSWPLPTLRVKKGDRVQLYLINGFDNLNTTLHFHGLFVRGANQMDGPEMVTQCPIPPGETYLYNFTVTDQVGTYWYHSHTGGQYGDGMRGVFIIEDDDFPYHYDEEVVLTLSDHYHKYSGDIGPAFLTRFNPTGAEPIPQNFLFNETRNATWKVEPGKTYFVRILNVGGFVSQYLWMEDHEFTIVEIDGVYVEKNTTDLIYITVAQRYGVLITTKNSTDKNYVFMNGVDTTMLDSVPADLQVNGTNYIVYNESSALPDAYDIDSYDDALDDFYLKPLSKQKLMDDADYTITVDVQMNVLNDGINYAFFNNISYKAPKVPTLLTVLSAGEAATNELIYGTNTNSFVLQGGDIVDIVLNNFDTGKHPFHLHGHVFQLIERHEAIGSKESAVTFNVSDHAEWPEYPMIRDTVYVKPHSYMVLRFKADNPVVWFFHCHVDWHLEQGLAVVLIEDPQAIQKNEKITENHKRICEKVGVPWEGNAAANSNDYLDLKGENVQVKRLPTGFTTKGIVALVFSCVAAFLGLFSFSFYGMNDIAHVEDKVARDLDIDLEAENEDEEEAVVLNQNSSSSDSNSKPH</sequence>
<accession>P78591</accession>
<keyword id="KW-1003">Cell membrane</keyword>
<keyword id="KW-0186">Copper</keyword>
<keyword id="KW-0325">Glycoprotein</keyword>
<keyword id="KW-0406">Ion transport</keyword>
<keyword id="KW-0408">Iron</keyword>
<keyword id="KW-0410">Iron transport</keyword>
<keyword id="KW-0472">Membrane</keyword>
<keyword id="KW-0479">Metal-binding</keyword>
<keyword id="KW-0560">Oxidoreductase</keyword>
<keyword id="KW-0677">Repeat</keyword>
<keyword id="KW-0732">Signal</keyword>
<keyword id="KW-0812">Transmembrane</keyword>
<keyword id="KW-1133">Transmembrane helix</keyword>
<keyword id="KW-0813">Transport</keyword>
<protein>
    <recommendedName>
        <fullName>Iron transport multicopper oxidase FET3</fullName>
        <ecNumber>1.-.-.-</ecNumber>
    </recommendedName>
</protein>
<gene>
    <name type="primary">FET3</name>
</gene>
<proteinExistence type="inferred from homology"/>
<name>FET3_CANAX</name>
<reference key="1">
    <citation type="journal article" date="1999" name="Microbiology">
        <title>A multicopper oxidase gene from Candida albicans: cloning, characterization and disruption.</title>
        <authorList>
            <person name="Eck R."/>
            <person name="Hundt S."/>
            <person name="Hartl A."/>
            <person name="Roemer E."/>
            <person name="Kunkel W."/>
        </authorList>
    </citation>
    <scope>NUCLEOTIDE SEQUENCE [GENOMIC DNA]</scope>
    <source>
        <strain>1161</strain>
    </source>
</reference>
<organism>
    <name type="scientific">Candida albicans</name>
    <name type="common">Yeast</name>
    <dbReference type="NCBI Taxonomy" id="5476"/>
    <lineage>
        <taxon>Eukaryota</taxon>
        <taxon>Fungi</taxon>
        <taxon>Dikarya</taxon>
        <taxon>Ascomycota</taxon>
        <taxon>Saccharomycotina</taxon>
        <taxon>Pichiomycetes</taxon>
        <taxon>Debaryomycetaceae</taxon>
        <taxon>Candida/Lodderomyces clade</taxon>
        <taxon>Candida</taxon>
    </lineage>
</organism>
<evidence type="ECO:0000250" key="1"/>
<evidence type="ECO:0000255" key="2"/>
<evidence type="ECO:0000256" key="3">
    <source>
        <dbReference type="SAM" id="MobiDB-lite"/>
    </source>
</evidence>
<evidence type="ECO:0000305" key="4"/>
<dbReference type="EC" id="1.-.-.-"/>
<dbReference type="EMBL" id="Y09329">
    <property type="protein sequence ID" value="CAA70509.1"/>
    <property type="molecule type" value="Genomic_DNA"/>
</dbReference>
<dbReference type="SMR" id="P78591"/>
<dbReference type="GlyCosmos" id="P78591">
    <property type="glycosylation" value="11 sites, No reported glycans"/>
</dbReference>
<dbReference type="VEuPathDB" id="FungiDB:C6_00460C_A"/>
<dbReference type="VEuPathDB" id="FungiDB:CAWG_05312"/>
<dbReference type="GO" id="GO:0033573">
    <property type="term" value="C:high-affinity iron permease complex"/>
    <property type="evidence" value="ECO:0007669"/>
    <property type="project" value="TreeGrafter"/>
</dbReference>
<dbReference type="GO" id="GO:0005507">
    <property type="term" value="F:copper ion binding"/>
    <property type="evidence" value="ECO:0007669"/>
    <property type="project" value="InterPro"/>
</dbReference>
<dbReference type="GO" id="GO:0004322">
    <property type="term" value="F:ferroxidase activity"/>
    <property type="evidence" value="ECO:0007669"/>
    <property type="project" value="TreeGrafter"/>
</dbReference>
<dbReference type="GO" id="GO:0010106">
    <property type="term" value="P:cellular response to iron ion starvation"/>
    <property type="evidence" value="ECO:0007669"/>
    <property type="project" value="TreeGrafter"/>
</dbReference>
<dbReference type="GO" id="GO:0033215">
    <property type="term" value="P:reductive iron assimilation"/>
    <property type="evidence" value="ECO:0007669"/>
    <property type="project" value="TreeGrafter"/>
</dbReference>
<dbReference type="CDD" id="cd13851">
    <property type="entry name" value="CuRO_1_Fet3p"/>
    <property type="match status" value="1"/>
</dbReference>
<dbReference type="CDD" id="cd13877">
    <property type="entry name" value="CuRO_2_Fet3p_like"/>
    <property type="match status" value="1"/>
</dbReference>
<dbReference type="CDD" id="cd13899">
    <property type="entry name" value="CuRO_3_Fet3p"/>
    <property type="match status" value="1"/>
</dbReference>
<dbReference type="FunFam" id="2.60.40.420:FF:000022">
    <property type="entry name" value="FET5p Multicopper oxidase"/>
    <property type="match status" value="1"/>
</dbReference>
<dbReference type="FunFam" id="2.60.40.420:FF:000024">
    <property type="entry name" value="FET5p Multicopper oxidase"/>
    <property type="match status" value="1"/>
</dbReference>
<dbReference type="FunFam" id="2.60.40.420:FF:000025">
    <property type="entry name" value="FET5p Multicopper oxidase"/>
    <property type="match status" value="1"/>
</dbReference>
<dbReference type="Gene3D" id="2.60.40.420">
    <property type="entry name" value="Cupredoxins - blue copper proteins"/>
    <property type="match status" value="3"/>
</dbReference>
<dbReference type="InterPro" id="IPR011707">
    <property type="entry name" value="Cu-oxidase-like_N"/>
</dbReference>
<dbReference type="InterPro" id="IPR001117">
    <property type="entry name" value="Cu-oxidase_2nd"/>
</dbReference>
<dbReference type="InterPro" id="IPR011706">
    <property type="entry name" value="Cu-oxidase_C"/>
</dbReference>
<dbReference type="InterPro" id="IPR045087">
    <property type="entry name" value="Cu-oxidase_fam"/>
</dbReference>
<dbReference type="InterPro" id="IPR033138">
    <property type="entry name" value="Cu_oxidase_CS"/>
</dbReference>
<dbReference type="InterPro" id="IPR002355">
    <property type="entry name" value="Cu_oxidase_Cu_BS"/>
</dbReference>
<dbReference type="InterPro" id="IPR008972">
    <property type="entry name" value="Cupredoxin"/>
</dbReference>
<dbReference type="InterPro" id="IPR044130">
    <property type="entry name" value="CuRO_2_Fet3-like"/>
</dbReference>
<dbReference type="PANTHER" id="PTHR11709:SF361">
    <property type="entry name" value="IRON TRANSPORT MULTICOPPER OXIDASE FET3"/>
    <property type="match status" value="1"/>
</dbReference>
<dbReference type="PANTHER" id="PTHR11709">
    <property type="entry name" value="MULTI-COPPER OXIDASE"/>
    <property type="match status" value="1"/>
</dbReference>
<dbReference type="Pfam" id="PF00394">
    <property type="entry name" value="Cu-oxidase"/>
    <property type="match status" value="1"/>
</dbReference>
<dbReference type="Pfam" id="PF07731">
    <property type="entry name" value="Cu-oxidase_2"/>
    <property type="match status" value="1"/>
</dbReference>
<dbReference type="Pfam" id="PF07732">
    <property type="entry name" value="Cu-oxidase_3"/>
    <property type="match status" value="1"/>
</dbReference>
<dbReference type="SUPFAM" id="SSF49503">
    <property type="entry name" value="Cupredoxins"/>
    <property type="match status" value="3"/>
</dbReference>
<dbReference type="PROSITE" id="PS00079">
    <property type="entry name" value="MULTICOPPER_OXIDASE1"/>
    <property type="match status" value="1"/>
</dbReference>
<dbReference type="PROSITE" id="PS00080">
    <property type="entry name" value="MULTICOPPER_OXIDASE2"/>
    <property type="match status" value="1"/>
</dbReference>
<comment type="function">
    <text evidence="1">Iron transport multicopper ferroxidase required for Fe(2+) high affinity uptake. Required to oxidize Fe(2+) and release it from the transporter. Essential component of copper-dependent iron transport (By similarity).</text>
</comment>
<comment type="cofactor">
    <cofactor evidence="1">
        <name>Cu cation</name>
        <dbReference type="ChEBI" id="CHEBI:23378"/>
    </cofactor>
    <text evidence="1">Binds 4 Cu cations per monomer.</text>
</comment>
<comment type="subcellular location">
    <subcellularLocation>
        <location evidence="4">Cell membrane</location>
        <topology evidence="4">Single-pass type I membrane protein</topology>
        <orientation evidence="4">Extracellular side</orientation>
    </subcellularLocation>
</comment>
<comment type="similarity">
    <text evidence="4">Belongs to the multicopper oxidase family.</text>
</comment>